<evidence type="ECO:0000255" key="1">
    <source>
        <dbReference type="PROSITE-ProRule" id="PRU00434"/>
    </source>
</evidence>
<evidence type="ECO:0000269" key="2">
    <source>
    </source>
</evidence>
<evidence type="ECO:0000303" key="3">
    <source>
    </source>
</evidence>
<evidence type="ECO:0000305" key="4"/>
<evidence type="ECO:0000305" key="5">
    <source>
    </source>
</evidence>
<protein>
    <recommendedName>
        <fullName evidence="4">Nitrate import ATP-binding protein NrtD</fullName>
        <ecNumber evidence="5">7.3.2.4</ecNumber>
    </recommendedName>
</protein>
<comment type="function">
    <text evidence="2 5">Part of the ABC transporter complex NrtABCD involved in nitrate uptake (PubMed:7767600, PubMed:8437564). The complex is probably also involved in nitrite transport (PubMed:7767600). Probably responsible for energy coupling to the transport system (PubMed:7767600).</text>
</comment>
<comment type="catalytic activity">
    <reaction evidence="5">
        <text>nitrate(out) + ATP + H2O = nitrate(in) + ADP + phosphate + H(+)</text>
        <dbReference type="Rhea" id="RHEA:13181"/>
        <dbReference type="ChEBI" id="CHEBI:15377"/>
        <dbReference type="ChEBI" id="CHEBI:15378"/>
        <dbReference type="ChEBI" id="CHEBI:17632"/>
        <dbReference type="ChEBI" id="CHEBI:30616"/>
        <dbReference type="ChEBI" id="CHEBI:43474"/>
        <dbReference type="ChEBI" id="CHEBI:456216"/>
        <dbReference type="EC" id="7.3.2.4"/>
    </reaction>
</comment>
<comment type="subunit">
    <text evidence="5">The complex is composed of two ATP-binding proteins (NrtC and NrtD), two transmembrane proteins (NrtB) and a solute-binding protein (NrtA).</text>
</comment>
<comment type="subcellular location">
    <subcellularLocation>
        <location evidence="5">Cell inner membrane</location>
        <topology evidence="5">Peripheral membrane protein</topology>
        <orientation evidence="5">Cytoplasmic side</orientation>
    </subcellularLocation>
</comment>
<comment type="disruption phenotype">
    <text evidence="2">Mutant requires high concentration of nitrate for growth. It grows normally with nitrite or ammonium as the nitrogen source.</text>
</comment>
<comment type="similarity">
    <text evidence="4">Belongs to the ABC transporter superfamily. Nitrate/nitrite/cyanate uptake transporter (NitT) (TC 3.A.1.16) family.</text>
</comment>
<name>NRTD_SYNE7</name>
<proteinExistence type="evidence at protein level"/>
<accession>P38046</accession>
<accession>Q31NV3</accession>
<feature type="chain" id="PRO_0000092648" description="Nitrate import ATP-binding protein NrtD">
    <location>
        <begin position="1"/>
        <end position="274"/>
    </location>
</feature>
<feature type="domain" description="ABC transporter" evidence="1">
    <location>
        <begin position="17"/>
        <end position="250"/>
    </location>
</feature>
<feature type="binding site" evidence="1">
    <location>
        <begin position="53"/>
        <end position="60"/>
    </location>
    <ligand>
        <name>ATP</name>
        <dbReference type="ChEBI" id="CHEBI:30616"/>
    </ligand>
</feature>
<reference key="1">
    <citation type="journal article" date="1993" name="Mol. Gen. Genet.">
        <title>Identification and characterization of a gene cluster involved in nitrate transport in the cyanobacterium Synechococcus sp. PCC7942.</title>
        <authorList>
            <person name="Omata T."/>
            <person name="Andriesse X."/>
            <person name="Hirano A."/>
        </authorList>
    </citation>
    <scope>NUCLEOTIDE SEQUENCE [GENOMIC DNA]</scope>
    <scope>FUNCTION</scope>
    <scope>DISRUPTION PHENOTYPE</scope>
</reference>
<reference key="2">
    <citation type="submission" date="2005-08" db="EMBL/GenBank/DDBJ databases">
        <title>Complete sequence of chromosome 1 of Synechococcus elongatus PCC 7942.</title>
        <authorList>
            <consortium name="US DOE Joint Genome Institute"/>
            <person name="Copeland A."/>
            <person name="Lucas S."/>
            <person name="Lapidus A."/>
            <person name="Barry K."/>
            <person name="Detter J.C."/>
            <person name="Glavina T."/>
            <person name="Hammon N."/>
            <person name="Israni S."/>
            <person name="Pitluck S."/>
            <person name="Schmutz J."/>
            <person name="Larimer F."/>
            <person name="Land M."/>
            <person name="Kyrpides N."/>
            <person name="Lykidis A."/>
            <person name="Golden S."/>
            <person name="Richardson P."/>
        </authorList>
    </citation>
    <scope>NUCLEOTIDE SEQUENCE [LARGE SCALE GENOMIC DNA]</scope>
    <source>
        <strain>ATCC 33912 / PCC 7942 / FACHB-805</strain>
    </source>
</reference>
<reference key="3">
    <citation type="journal article" date="1995" name="Plant Cell Physiol.">
        <title>Structure, function and regulation of the nitrate transport system of the cyanobacterium Synechococcus sp. PCC7942.</title>
        <authorList>
            <person name="Omata T."/>
        </authorList>
    </citation>
    <scope>FUNCTION</scope>
    <scope>CATALYTIC ACTIVITY</scope>
    <scope>SUBUNIT</scope>
    <scope>SUBCELLULAR LOCATION</scope>
    <source>
        <strain>ATCC 33912 / PCC 7942 / FACHB-805</strain>
    </source>
</reference>
<keyword id="KW-0067">ATP-binding</keyword>
<keyword id="KW-0997">Cell inner membrane</keyword>
<keyword id="KW-1003">Cell membrane</keyword>
<keyword id="KW-0406">Ion transport</keyword>
<keyword id="KW-0472">Membrane</keyword>
<keyword id="KW-0534">Nitrate assimilation</keyword>
<keyword id="KW-0547">Nucleotide-binding</keyword>
<keyword id="KW-1185">Reference proteome</keyword>
<keyword id="KW-1278">Translocase</keyword>
<keyword id="KW-0813">Transport</keyword>
<gene>
    <name evidence="3" type="primary">nrtD</name>
    <name type="ordered locus">Synpcc7942_1236</name>
</gene>
<organism>
    <name type="scientific">Synechococcus elongatus (strain ATCC 33912 / PCC 7942 / FACHB-805)</name>
    <name type="common">Anacystis nidulans R2</name>
    <dbReference type="NCBI Taxonomy" id="1140"/>
    <lineage>
        <taxon>Bacteria</taxon>
        <taxon>Bacillati</taxon>
        <taxon>Cyanobacteriota</taxon>
        <taxon>Cyanophyceae</taxon>
        <taxon>Synechococcales</taxon>
        <taxon>Synechococcaceae</taxon>
        <taxon>Synechococcus</taxon>
    </lineage>
</organism>
<dbReference type="EC" id="7.3.2.4" evidence="5"/>
<dbReference type="EMBL" id="X61625">
    <property type="protein sequence ID" value="CAA43812.1"/>
    <property type="molecule type" value="Genomic_DNA"/>
</dbReference>
<dbReference type="EMBL" id="X74597">
    <property type="protein sequence ID" value="CAA52674.1"/>
    <property type="molecule type" value="Genomic_DNA"/>
</dbReference>
<dbReference type="EMBL" id="CP000100">
    <property type="protein sequence ID" value="ABB57266.1"/>
    <property type="molecule type" value="Genomic_DNA"/>
</dbReference>
<dbReference type="RefSeq" id="WP_011242628.1">
    <property type="nucleotide sequence ID" value="NZ_JACJTX010000003.1"/>
</dbReference>
<dbReference type="SMR" id="P38046"/>
<dbReference type="STRING" id="1140.Synpcc7942_1236"/>
<dbReference type="TCDB" id="3.A.1.16.1">
    <property type="family name" value="the atp-binding cassette (abc) superfamily"/>
</dbReference>
<dbReference type="PaxDb" id="1140-Synpcc7942_1236"/>
<dbReference type="KEGG" id="syf:Synpcc7942_1236"/>
<dbReference type="eggNOG" id="COG1116">
    <property type="taxonomic scope" value="Bacteria"/>
</dbReference>
<dbReference type="HOGENOM" id="CLU_000604_1_22_3"/>
<dbReference type="OrthoDB" id="450403at2"/>
<dbReference type="BioCyc" id="SYNEL:SYNPCC7942_1236-MONOMER"/>
<dbReference type="Proteomes" id="UP000889800">
    <property type="component" value="Chromosome"/>
</dbReference>
<dbReference type="GO" id="GO:0005886">
    <property type="term" value="C:plasma membrane"/>
    <property type="evidence" value="ECO:0007669"/>
    <property type="project" value="UniProtKB-SubCell"/>
</dbReference>
<dbReference type="GO" id="GO:0015414">
    <property type="term" value="F:ABC-type nitrate transporter activity"/>
    <property type="evidence" value="ECO:0007669"/>
    <property type="project" value="UniProtKB-EC"/>
</dbReference>
<dbReference type="GO" id="GO:0005524">
    <property type="term" value="F:ATP binding"/>
    <property type="evidence" value="ECO:0007669"/>
    <property type="project" value="UniProtKB-KW"/>
</dbReference>
<dbReference type="GO" id="GO:0016887">
    <property type="term" value="F:ATP hydrolysis activity"/>
    <property type="evidence" value="ECO:0007669"/>
    <property type="project" value="InterPro"/>
</dbReference>
<dbReference type="GO" id="GO:0042128">
    <property type="term" value="P:nitrate assimilation"/>
    <property type="evidence" value="ECO:0007669"/>
    <property type="project" value="UniProtKB-KW"/>
</dbReference>
<dbReference type="CDD" id="cd03293">
    <property type="entry name" value="ABC_NrtD_SsuB_transporters"/>
    <property type="match status" value="1"/>
</dbReference>
<dbReference type="Gene3D" id="3.40.50.300">
    <property type="entry name" value="P-loop containing nucleotide triphosphate hydrolases"/>
    <property type="match status" value="1"/>
</dbReference>
<dbReference type="InterPro" id="IPR003593">
    <property type="entry name" value="AAA+_ATPase"/>
</dbReference>
<dbReference type="InterPro" id="IPR003439">
    <property type="entry name" value="ABC_transporter-like_ATP-bd"/>
</dbReference>
<dbReference type="InterPro" id="IPR017871">
    <property type="entry name" value="ABC_transporter-like_CS"/>
</dbReference>
<dbReference type="InterPro" id="IPR050166">
    <property type="entry name" value="ABC_transporter_ATP-bind"/>
</dbReference>
<dbReference type="InterPro" id="IPR005890">
    <property type="entry name" value="NO3_transporter_ATP-bd-like"/>
</dbReference>
<dbReference type="InterPro" id="IPR027417">
    <property type="entry name" value="P-loop_NTPase"/>
</dbReference>
<dbReference type="NCBIfam" id="TIGR01184">
    <property type="entry name" value="ntrCD"/>
    <property type="match status" value="1"/>
</dbReference>
<dbReference type="PANTHER" id="PTHR42788:SF7">
    <property type="entry name" value="NITRATE ABC TRANSPORTER ATP-BINDING PROTEIN"/>
    <property type="match status" value="1"/>
</dbReference>
<dbReference type="PANTHER" id="PTHR42788">
    <property type="entry name" value="TAURINE IMPORT ATP-BINDING PROTEIN-RELATED"/>
    <property type="match status" value="1"/>
</dbReference>
<dbReference type="Pfam" id="PF00005">
    <property type="entry name" value="ABC_tran"/>
    <property type="match status" value="1"/>
</dbReference>
<dbReference type="SMART" id="SM00382">
    <property type="entry name" value="AAA"/>
    <property type="match status" value="1"/>
</dbReference>
<dbReference type="SUPFAM" id="SSF52540">
    <property type="entry name" value="P-loop containing nucleoside triphosphate hydrolases"/>
    <property type="match status" value="1"/>
</dbReference>
<dbReference type="PROSITE" id="PS00211">
    <property type="entry name" value="ABC_TRANSPORTER_1"/>
    <property type="match status" value="1"/>
</dbReference>
<dbReference type="PROSITE" id="PS50893">
    <property type="entry name" value="ABC_TRANSPORTER_2"/>
    <property type="match status" value="1"/>
</dbReference>
<sequence length="274" mass="30366">MTAILPSTAATVNTGFLHFDCVGKTFPTPRGPYVAIEDVNLSVQQGEFICVIGHSGCGKSTLLNLVSGFSQPTSGGVYLDGQPIQEPGPDRMVVFQNYSLLPWKSARDNIALAVKAARPHLSTSEQRQVVDHHLELVGLTEAQHKRPDQLSGGMKQRVAIARALSIRPEVLILDEPFGALDAITKEELQEELLNIWEEARPTVLMITHDIDEALFLADRVVMMTNGPAATIGEVLEIPFDRPREREAVVEDPRYAQLRTEALDFLYRRFAHDDD</sequence>